<sequence>MAKVDIDIVDFEYIEEIIRNRYPELSITSVQDSKFWSIQIVIEGPLEDLTRFMANEYCDGMDSEDAEFYMGLIEQ</sequence>
<proteinExistence type="predicted"/>
<organism>
    <name type="scientific">Enterobacteria phage LZ5</name>
    <name type="common">Bacteriophage LZ5</name>
    <dbReference type="NCBI Taxonomy" id="37363"/>
    <lineage>
        <taxon>Viruses</taxon>
        <taxon>Duplodnaviria</taxon>
        <taxon>Heunggongvirae</taxon>
        <taxon>Uroviricota</taxon>
        <taxon>Caudoviricetes</taxon>
        <taxon>Straboviridae</taxon>
        <taxon>Tevenvirinae</taxon>
        <taxon>Tequatrovirus</taxon>
    </lineage>
</organism>
<name>Y14E_BPLZ5</name>
<accession>Q76VG7</accession>
<feature type="chain" id="PRO_0000165198" description="Uncharacterized 8.8 kDa protein in frd-Gp32 intergenic region">
    <location>
        <begin position="1"/>
        <end position="75"/>
    </location>
</feature>
<reference key="1">
    <citation type="submission" date="1995-08" db="EMBL/GenBank/DDBJ databases">
        <title>DNA sequences of the frd region in T4-related bacteriophages.</title>
        <authorList>
            <person name="Poglazov A.B."/>
            <person name="Porter D."/>
            <person name="Kutter E.M."/>
            <person name="Mesyanzhinov V.V."/>
        </authorList>
    </citation>
    <scope>NUCLEOTIDE SEQUENCE [GENOMIC DNA]</scope>
</reference>
<dbReference type="EMBL" id="L46837">
    <property type="protein sequence ID" value="AAA74679.1"/>
    <property type="molecule type" value="Genomic_DNA"/>
</dbReference>
<dbReference type="InterPro" id="IPR008765">
    <property type="entry name" value="Phage_T4_Frd3"/>
</dbReference>
<dbReference type="Pfam" id="PF05798">
    <property type="entry name" value="Phage_FRD3"/>
    <property type="match status" value="1"/>
</dbReference>
<gene>
    <name type="primary">frd.3</name>
    <name type="synonym">frd3</name>
</gene>
<protein>
    <recommendedName>
        <fullName>Uncharacterized 8.8 kDa protein in frd-Gp32 intergenic region</fullName>
    </recommendedName>
</protein>
<organismHost>
    <name type="scientific">Escherichia coli</name>
    <dbReference type="NCBI Taxonomy" id="562"/>
</organismHost>